<organism>
    <name type="scientific">Saccharolobus islandicus (strain M.16.4 / Kamchatka #3)</name>
    <name type="common">Sulfolobus islandicus</name>
    <dbReference type="NCBI Taxonomy" id="426118"/>
    <lineage>
        <taxon>Archaea</taxon>
        <taxon>Thermoproteota</taxon>
        <taxon>Thermoprotei</taxon>
        <taxon>Sulfolobales</taxon>
        <taxon>Sulfolobaceae</taxon>
        <taxon>Saccharolobus</taxon>
    </lineage>
</organism>
<gene>
    <name evidence="1" type="primary">speE</name>
    <name type="ordered locus">M164_1378</name>
</gene>
<name>SPEE_SACI6</name>
<sequence>MFGWHWLLEWQTPYEFHGHLIEKVFAEEKTPYQHVTLVEFTRFGKGLIIDGKVQSTLYDEHIYHELLVHPLLLSLPKPPKNVLILGGGEGATLREVLKYKSVEKAVMVDIDEKVIEFAKKYLYEWHQGAFEDKRTSLVITDGLKFINETKDKYDAIILDLTDPIKDSTSYMLYTKEFYEKLRGILNQGGGIVTQATSPSFSLEVYVTIYNTIKEVFKEASASYTYMASFDGLWGFVYGGVRPDLLSEDEVNSRIRERISGQLRFYDDYSHKISFSLPKNIKSEFKKITKVSTEKDPIYVPA</sequence>
<protein>
    <recommendedName>
        <fullName evidence="1">Polyamine aminopropyltransferase</fullName>
    </recommendedName>
    <alternativeName>
        <fullName evidence="1">Putrescine aminopropyltransferase</fullName>
        <shortName evidence="1">PAPT</shortName>
    </alternativeName>
    <alternativeName>
        <fullName evidence="1">Spermidine synthase</fullName>
        <shortName evidence="1">SPDS</shortName>
        <shortName evidence="1">SPDSY</shortName>
        <ecNumber evidence="1">2.5.1.16</ecNumber>
    </alternativeName>
</protein>
<dbReference type="EC" id="2.5.1.16" evidence="1"/>
<dbReference type="EMBL" id="CP001402">
    <property type="protein sequence ID" value="ACR41984.1"/>
    <property type="molecule type" value="Genomic_DNA"/>
</dbReference>
<dbReference type="RefSeq" id="WP_012711385.1">
    <property type="nucleotide sequence ID" value="NC_012726.1"/>
</dbReference>
<dbReference type="SMR" id="C4KHC0"/>
<dbReference type="KEGG" id="sid:M164_1378"/>
<dbReference type="HOGENOM" id="CLU_048199_0_1_2"/>
<dbReference type="UniPathway" id="UPA00248">
    <property type="reaction ID" value="UER00314"/>
</dbReference>
<dbReference type="Proteomes" id="UP000001479">
    <property type="component" value="Chromosome"/>
</dbReference>
<dbReference type="GO" id="GO:0005737">
    <property type="term" value="C:cytoplasm"/>
    <property type="evidence" value="ECO:0007669"/>
    <property type="project" value="UniProtKB-SubCell"/>
</dbReference>
<dbReference type="GO" id="GO:0004766">
    <property type="term" value="F:spermidine synthase activity"/>
    <property type="evidence" value="ECO:0007669"/>
    <property type="project" value="UniProtKB-UniRule"/>
</dbReference>
<dbReference type="GO" id="GO:0010487">
    <property type="term" value="F:thermospermine synthase activity"/>
    <property type="evidence" value="ECO:0007669"/>
    <property type="project" value="UniProtKB-ARBA"/>
</dbReference>
<dbReference type="GO" id="GO:0008295">
    <property type="term" value="P:spermidine biosynthetic process"/>
    <property type="evidence" value="ECO:0007669"/>
    <property type="project" value="UniProtKB-UniRule"/>
</dbReference>
<dbReference type="CDD" id="cd02440">
    <property type="entry name" value="AdoMet_MTases"/>
    <property type="match status" value="1"/>
</dbReference>
<dbReference type="FunFam" id="2.30.140.10:FF:000017">
    <property type="entry name" value="Polyamine aminopropyltransferase"/>
    <property type="match status" value="1"/>
</dbReference>
<dbReference type="FunFam" id="3.40.50.150:FF:000088">
    <property type="entry name" value="Polyamine aminopropyltransferase"/>
    <property type="match status" value="1"/>
</dbReference>
<dbReference type="Gene3D" id="2.30.140.10">
    <property type="entry name" value="Spermidine synthase, tetramerisation domain"/>
    <property type="match status" value="1"/>
</dbReference>
<dbReference type="Gene3D" id="3.40.50.150">
    <property type="entry name" value="Vaccinia Virus protein VP39"/>
    <property type="match status" value="1"/>
</dbReference>
<dbReference type="HAMAP" id="MF_00198">
    <property type="entry name" value="Spermidine_synth"/>
    <property type="match status" value="1"/>
</dbReference>
<dbReference type="InterPro" id="IPR030374">
    <property type="entry name" value="PABS"/>
</dbReference>
<dbReference type="InterPro" id="IPR030373">
    <property type="entry name" value="PABS_CS"/>
</dbReference>
<dbReference type="InterPro" id="IPR029063">
    <property type="entry name" value="SAM-dependent_MTases_sf"/>
</dbReference>
<dbReference type="InterPro" id="IPR001045">
    <property type="entry name" value="Spermi_synthase"/>
</dbReference>
<dbReference type="InterPro" id="IPR035246">
    <property type="entry name" value="Spermidine_synt_N"/>
</dbReference>
<dbReference type="InterPro" id="IPR037163">
    <property type="entry name" value="Spermidine_synt_N_sf"/>
</dbReference>
<dbReference type="PANTHER" id="PTHR43317">
    <property type="entry name" value="THERMOSPERMINE SYNTHASE ACAULIS5"/>
    <property type="match status" value="1"/>
</dbReference>
<dbReference type="PANTHER" id="PTHR43317:SF1">
    <property type="entry name" value="THERMOSPERMINE SYNTHASE ACAULIS5"/>
    <property type="match status" value="1"/>
</dbReference>
<dbReference type="Pfam" id="PF17284">
    <property type="entry name" value="Spermine_synt_N"/>
    <property type="match status" value="1"/>
</dbReference>
<dbReference type="Pfam" id="PF01564">
    <property type="entry name" value="Spermine_synth"/>
    <property type="match status" value="1"/>
</dbReference>
<dbReference type="SUPFAM" id="SSF53335">
    <property type="entry name" value="S-adenosyl-L-methionine-dependent methyltransferases"/>
    <property type="match status" value="1"/>
</dbReference>
<dbReference type="PROSITE" id="PS01330">
    <property type="entry name" value="PABS_1"/>
    <property type="match status" value="1"/>
</dbReference>
<dbReference type="PROSITE" id="PS51006">
    <property type="entry name" value="PABS_2"/>
    <property type="match status" value="1"/>
</dbReference>
<proteinExistence type="inferred from homology"/>
<feature type="chain" id="PRO_1000204078" description="Polyamine aminopropyltransferase">
    <location>
        <begin position="1"/>
        <end position="301"/>
    </location>
</feature>
<feature type="domain" description="PABS" evidence="1">
    <location>
        <begin position="4"/>
        <end position="240"/>
    </location>
</feature>
<feature type="active site" description="Proton acceptor" evidence="1">
    <location>
        <position position="159"/>
    </location>
</feature>
<feature type="binding site" evidence="1">
    <location>
        <position position="33"/>
    </location>
    <ligand>
        <name>S-methyl-5'-thioadenosine</name>
        <dbReference type="ChEBI" id="CHEBI:17509"/>
    </ligand>
</feature>
<feature type="binding site" evidence="1">
    <location>
        <position position="64"/>
    </location>
    <ligand>
        <name>spermidine</name>
        <dbReference type="ChEBI" id="CHEBI:57834"/>
    </ligand>
</feature>
<feature type="binding site" evidence="1">
    <location>
        <position position="89"/>
    </location>
    <ligand>
        <name>spermidine</name>
        <dbReference type="ChEBI" id="CHEBI:57834"/>
    </ligand>
</feature>
<feature type="binding site" evidence="1">
    <location>
        <position position="109"/>
    </location>
    <ligand>
        <name>S-methyl-5'-thioadenosine</name>
        <dbReference type="ChEBI" id="CHEBI:17509"/>
    </ligand>
</feature>
<feature type="binding site" evidence="1">
    <location>
        <begin position="141"/>
        <end position="142"/>
    </location>
    <ligand>
        <name>S-methyl-5'-thioadenosine</name>
        <dbReference type="ChEBI" id="CHEBI:17509"/>
    </ligand>
</feature>
<reference key="1">
    <citation type="journal article" date="2009" name="Proc. Natl. Acad. Sci. U.S.A.">
        <title>Biogeography of the Sulfolobus islandicus pan-genome.</title>
        <authorList>
            <person name="Reno M.L."/>
            <person name="Held N.L."/>
            <person name="Fields C.J."/>
            <person name="Burke P.V."/>
            <person name="Whitaker R.J."/>
        </authorList>
    </citation>
    <scope>NUCLEOTIDE SEQUENCE [LARGE SCALE GENOMIC DNA]</scope>
    <source>
        <strain>M.16.4 / Kamchatka #3</strain>
    </source>
</reference>
<keyword id="KW-0963">Cytoplasm</keyword>
<keyword id="KW-0620">Polyamine biosynthesis</keyword>
<keyword id="KW-0745">Spermidine biosynthesis</keyword>
<keyword id="KW-0808">Transferase</keyword>
<accession>C4KHC0</accession>
<evidence type="ECO:0000255" key="1">
    <source>
        <dbReference type="HAMAP-Rule" id="MF_00198"/>
    </source>
</evidence>
<comment type="function">
    <text evidence="1">Catalyzes the irreversible transfer of a propylamine group from the amino donor S-adenosylmethioninamine (decarboxy-AdoMet) to putrescine (1,4-diaminobutane) to yield spermidine.</text>
</comment>
<comment type="catalytic activity">
    <reaction evidence="1">
        <text>S-adenosyl 3-(methylsulfanyl)propylamine + putrescine = S-methyl-5'-thioadenosine + spermidine + H(+)</text>
        <dbReference type="Rhea" id="RHEA:12721"/>
        <dbReference type="ChEBI" id="CHEBI:15378"/>
        <dbReference type="ChEBI" id="CHEBI:17509"/>
        <dbReference type="ChEBI" id="CHEBI:57443"/>
        <dbReference type="ChEBI" id="CHEBI:57834"/>
        <dbReference type="ChEBI" id="CHEBI:326268"/>
        <dbReference type="EC" id="2.5.1.16"/>
    </reaction>
</comment>
<comment type="pathway">
    <text evidence="1">Amine and polyamine biosynthesis; spermidine biosynthesis; spermidine from putrescine: step 1/1.</text>
</comment>
<comment type="subunit">
    <text evidence="1">Homodimer or homotetramer.</text>
</comment>
<comment type="subcellular location">
    <subcellularLocation>
        <location evidence="1">Cytoplasm</location>
    </subcellularLocation>
</comment>
<comment type="similarity">
    <text evidence="1">Belongs to the spermidine/spermine synthase family.</text>
</comment>